<protein>
    <recommendedName>
        <fullName evidence="1">Argininosuccinate synthase</fullName>
        <ecNumber evidence="1">6.3.4.5</ecNumber>
    </recommendedName>
    <alternativeName>
        <fullName evidence="1">Citrulline--aspartate ligase</fullName>
    </alternativeName>
</protein>
<comment type="catalytic activity">
    <reaction evidence="1">
        <text>L-citrulline + L-aspartate + ATP = 2-(N(omega)-L-arginino)succinate + AMP + diphosphate + H(+)</text>
        <dbReference type="Rhea" id="RHEA:10932"/>
        <dbReference type="ChEBI" id="CHEBI:15378"/>
        <dbReference type="ChEBI" id="CHEBI:29991"/>
        <dbReference type="ChEBI" id="CHEBI:30616"/>
        <dbReference type="ChEBI" id="CHEBI:33019"/>
        <dbReference type="ChEBI" id="CHEBI:57472"/>
        <dbReference type="ChEBI" id="CHEBI:57743"/>
        <dbReference type="ChEBI" id="CHEBI:456215"/>
        <dbReference type="EC" id="6.3.4.5"/>
    </reaction>
</comment>
<comment type="pathway">
    <text evidence="1">Amino-acid biosynthesis; L-arginine biosynthesis; L-arginine from L-ornithine and carbamoyl phosphate: step 2/3.</text>
</comment>
<comment type="subunit">
    <text evidence="1">Homotetramer.</text>
</comment>
<comment type="subcellular location">
    <subcellularLocation>
        <location evidence="1">Cytoplasm</location>
    </subcellularLocation>
</comment>
<comment type="similarity">
    <text evidence="1">Belongs to the argininosuccinate synthase family. Type 1 subfamily.</text>
</comment>
<dbReference type="EC" id="6.3.4.5" evidence="1"/>
<dbReference type="EMBL" id="CP000141">
    <property type="protein sequence ID" value="ABB15960.1"/>
    <property type="molecule type" value="Genomic_DNA"/>
</dbReference>
<dbReference type="RefSeq" id="WP_011345142.1">
    <property type="nucleotide sequence ID" value="NC_007503.1"/>
</dbReference>
<dbReference type="SMR" id="Q3A9W5"/>
<dbReference type="FunCoup" id="Q3A9W5">
    <property type="interactions" value="361"/>
</dbReference>
<dbReference type="STRING" id="246194.CHY_2260"/>
<dbReference type="KEGG" id="chy:CHY_2260"/>
<dbReference type="eggNOG" id="COG0137">
    <property type="taxonomic scope" value="Bacteria"/>
</dbReference>
<dbReference type="HOGENOM" id="CLU_032784_4_2_9"/>
<dbReference type="InParanoid" id="Q3A9W5"/>
<dbReference type="OrthoDB" id="9801641at2"/>
<dbReference type="UniPathway" id="UPA00068">
    <property type="reaction ID" value="UER00113"/>
</dbReference>
<dbReference type="Proteomes" id="UP000002706">
    <property type="component" value="Chromosome"/>
</dbReference>
<dbReference type="GO" id="GO:0005737">
    <property type="term" value="C:cytoplasm"/>
    <property type="evidence" value="ECO:0007669"/>
    <property type="project" value="UniProtKB-SubCell"/>
</dbReference>
<dbReference type="GO" id="GO:0004055">
    <property type="term" value="F:argininosuccinate synthase activity"/>
    <property type="evidence" value="ECO:0007669"/>
    <property type="project" value="UniProtKB-UniRule"/>
</dbReference>
<dbReference type="GO" id="GO:0005524">
    <property type="term" value="F:ATP binding"/>
    <property type="evidence" value="ECO:0007669"/>
    <property type="project" value="UniProtKB-UniRule"/>
</dbReference>
<dbReference type="GO" id="GO:0000053">
    <property type="term" value="P:argininosuccinate metabolic process"/>
    <property type="evidence" value="ECO:0007669"/>
    <property type="project" value="TreeGrafter"/>
</dbReference>
<dbReference type="GO" id="GO:0006526">
    <property type="term" value="P:L-arginine biosynthetic process"/>
    <property type="evidence" value="ECO:0007669"/>
    <property type="project" value="UniProtKB-UniRule"/>
</dbReference>
<dbReference type="GO" id="GO:0000050">
    <property type="term" value="P:urea cycle"/>
    <property type="evidence" value="ECO:0007669"/>
    <property type="project" value="TreeGrafter"/>
</dbReference>
<dbReference type="CDD" id="cd01999">
    <property type="entry name" value="ASS"/>
    <property type="match status" value="1"/>
</dbReference>
<dbReference type="FunFam" id="3.40.50.620:FF:000019">
    <property type="entry name" value="Argininosuccinate synthase"/>
    <property type="match status" value="1"/>
</dbReference>
<dbReference type="FunFam" id="3.90.1260.10:FF:000007">
    <property type="entry name" value="Argininosuccinate synthase"/>
    <property type="match status" value="1"/>
</dbReference>
<dbReference type="Gene3D" id="3.90.1260.10">
    <property type="entry name" value="Argininosuccinate synthetase, chain A, domain 2"/>
    <property type="match status" value="1"/>
</dbReference>
<dbReference type="Gene3D" id="3.40.50.620">
    <property type="entry name" value="HUPs"/>
    <property type="match status" value="1"/>
</dbReference>
<dbReference type="Gene3D" id="1.20.5.470">
    <property type="entry name" value="Single helix bin"/>
    <property type="match status" value="1"/>
</dbReference>
<dbReference type="HAMAP" id="MF_00005">
    <property type="entry name" value="Arg_succ_synth_type1"/>
    <property type="match status" value="1"/>
</dbReference>
<dbReference type="InterPro" id="IPR048268">
    <property type="entry name" value="Arginosuc_syn_C"/>
</dbReference>
<dbReference type="InterPro" id="IPR048267">
    <property type="entry name" value="Arginosuc_syn_N"/>
</dbReference>
<dbReference type="InterPro" id="IPR001518">
    <property type="entry name" value="Arginosuc_synth"/>
</dbReference>
<dbReference type="InterPro" id="IPR018223">
    <property type="entry name" value="Arginosuc_synth_CS"/>
</dbReference>
<dbReference type="InterPro" id="IPR023434">
    <property type="entry name" value="Arginosuc_synth_type_1_subfam"/>
</dbReference>
<dbReference type="InterPro" id="IPR024074">
    <property type="entry name" value="AS_cat/multimer_dom_body"/>
</dbReference>
<dbReference type="InterPro" id="IPR014729">
    <property type="entry name" value="Rossmann-like_a/b/a_fold"/>
</dbReference>
<dbReference type="NCBIfam" id="TIGR00032">
    <property type="entry name" value="argG"/>
    <property type="match status" value="1"/>
</dbReference>
<dbReference type="NCBIfam" id="NF001770">
    <property type="entry name" value="PRK00509.1"/>
    <property type="match status" value="1"/>
</dbReference>
<dbReference type="PANTHER" id="PTHR11587">
    <property type="entry name" value="ARGININOSUCCINATE SYNTHASE"/>
    <property type="match status" value="1"/>
</dbReference>
<dbReference type="PANTHER" id="PTHR11587:SF2">
    <property type="entry name" value="ARGININOSUCCINATE SYNTHASE"/>
    <property type="match status" value="1"/>
</dbReference>
<dbReference type="Pfam" id="PF20979">
    <property type="entry name" value="Arginosuc_syn_C"/>
    <property type="match status" value="1"/>
</dbReference>
<dbReference type="Pfam" id="PF00764">
    <property type="entry name" value="Arginosuc_synth"/>
    <property type="match status" value="1"/>
</dbReference>
<dbReference type="SUPFAM" id="SSF52402">
    <property type="entry name" value="Adenine nucleotide alpha hydrolases-like"/>
    <property type="match status" value="1"/>
</dbReference>
<dbReference type="SUPFAM" id="SSF69864">
    <property type="entry name" value="Argininosuccinate synthetase, C-terminal domain"/>
    <property type="match status" value="1"/>
</dbReference>
<dbReference type="PROSITE" id="PS00564">
    <property type="entry name" value="ARGININOSUCCIN_SYN_1"/>
    <property type="match status" value="1"/>
</dbReference>
<dbReference type="PROSITE" id="PS00565">
    <property type="entry name" value="ARGININOSUCCIN_SYN_2"/>
    <property type="match status" value="1"/>
</dbReference>
<evidence type="ECO:0000255" key="1">
    <source>
        <dbReference type="HAMAP-Rule" id="MF_00005"/>
    </source>
</evidence>
<accession>Q3A9W5</accession>
<keyword id="KW-0028">Amino-acid biosynthesis</keyword>
<keyword id="KW-0055">Arginine biosynthesis</keyword>
<keyword id="KW-0067">ATP-binding</keyword>
<keyword id="KW-0963">Cytoplasm</keyword>
<keyword id="KW-0436">Ligase</keyword>
<keyword id="KW-0547">Nucleotide-binding</keyword>
<keyword id="KW-1185">Reference proteome</keyword>
<sequence>MAEKVVLAYSGGLDTSIIIPWLKENYGYEVIAMVADVGQGEELEPLREKAIKSGAAKIYIEDVKEEFVRDFVFPMLKAGAVYENKYLLGTSVARPLIAKKLVEIAEKEGAVAVAHGATGKGNDQVRFELTVKALNPDLKIIAPWREWEIKSREDAIDYAEKRGIPVPVTKKQPYSMDRNLWHLSHEGGILEDPAVEPPEDVLLLTNPPEKAPDQPEYVEIEFVKGEPVAVNGEKLSPVELIFKLNELGGKHGIGIADMVENRLVGMKSRGVYETPGGTILTFAHRELESLTLDRQTMHFKQMVALKYAELIYDGLWFTPLREALEAFVDKTQETVTGKVRVKLYKGNIYPAGITSPYSLYVKDLATFGEDNLYNQKDAEGFINLFGLPLKVRAMTQKPYQK</sequence>
<feature type="chain" id="PRO_0000263910" description="Argininosuccinate synthase">
    <location>
        <begin position="1"/>
        <end position="401"/>
    </location>
</feature>
<feature type="binding site" evidence="1">
    <location>
        <begin position="8"/>
        <end position="16"/>
    </location>
    <ligand>
        <name>ATP</name>
        <dbReference type="ChEBI" id="CHEBI:30616"/>
    </ligand>
</feature>
<feature type="binding site" evidence="1">
    <location>
        <position position="35"/>
    </location>
    <ligand>
        <name>ATP</name>
        <dbReference type="ChEBI" id="CHEBI:30616"/>
    </ligand>
</feature>
<feature type="binding site" evidence="1">
    <location>
        <position position="86"/>
    </location>
    <ligand>
        <name>L-citrulline</name>
        <dbReference type="ChEBI" id="CHEBI:57743"/>
    </ligand>
</feature>
<feature type="binding site" evidence="1">
    <location>
        <position position="91"/>
    </location>
    <ligand>
        <name>L-citrulline</name>
        <dbReference type="ChEBI" id="CHEBI:57743"/>
    </ligand>
</feature>
<feature type="binding site" evidence="1">
    <location>
        <position position="116"/>
    </location>
    <ligand>
        <name>ATP</name>
        <dbReference type="ChEBI" id="CHEBI:30616"/>
    </ligand>
</feature>
<feature type="binding site" evidence="1">
    <location>
        <position position="118"/>
    </location>
    <ligand>
        <name>L-aspartate</name>
        <dbReference type="ChEBI" id="CHEBI:29991"/>
    </ligand>
</feature>
<feature type="binding site" evidence="1">
    <location>
        <position position="122"/>
    </location>
    <ligand>
        <name>L-aspartate</name>
        <dbReference type="ChEBI" id="CHEBI:29991"/>
    </ligand>
</feature>
<feature type="binding site" evidence="1">
    <location>
        <position position="122"/>
    </location>
    <ligand>
        <name>L-citrulline</name>
        <dbReference type="ChEBI" id="CHEBI:57743"/>
    </ligand>
</feature>
<feature type="binding site" evidence="1">
    <location>
        <position position="123"/>
    </location>
    <ligand>
        <name>L-aspartate</name>
        <dbReference type="ChEBI" id="CHEBI:29991"/>
    </ligand>
</feature>
<feature type="binding site" evidence="1">
    <location>
        <position position="126"/>
    </location>
    <ligand>
        <name>L-citrulline</name>
        <dbReference type="ChEBI" id="CHEBI:57743"/>
    </ligand>
</feature>
<feature type="binding site" evidence="1">
    <location>
        <position position="175"/>
    </location>
    <ligand>
        <name>L-citrulline</name>
        <dbReference type="ChEBI" id="CHEBI:57743"/>
    </ligand>
</feature>
<feature type="binding site" evidence="1">
    <location>
        <position position="184"/>
    </location>
    <ligand>
        <name>L-citrulline</name>
        <dbReference type="ChEBI" id="CHEBI:57743"/>
    </ligand>
</feature>
<feature type="binding site" evidence="1">
    <location>
        <position position="260"/>
    </location>
    <ligand>
        <name>L-citrulline</name>
        <dbReference type="ChEBI" id="CHEBI:57743"/>
    </ligand>
</feature>
<feature type="binding site" evidence="1">
    <location>
        <position position="272"/>
    </location>
    <ligand>
        <name>L-citrulline</name>
        <dbReference type="ChEBI" id="CHEBI:57743"/>
    </ligand>
</feature>
<reference key="1">
    <citation type="journal article" date="2005" name="PLoS Genet.">
        <title>Life in hot carbon monoxide: the complete genome sequence of Carboxydothermus hydrogenoformans Z-2901.</title>
        <authorList>
            <person name="Wu M."/>
            <person name="Ren Q."/>
            <person name="Durkin A.S."/>
            <person name="Daugherty S.C."/>
            <person name="Brinkac L.M."/>
            <person name="Dodson R.J."/>
            <person name="Madupu R."/>
            <person name="Sullivan S.A."/>
            <person name="Kolonay J.F."/>
            <person name="Nelson W.C."/>
            <person name="Tallon L.J."/>
            <person name="Jones K.M."/>
            <person name="Ulrich L.E."/>
            <person name="Gonzalez J.M."/>
            <person name="Zhulin I.B."/>
            <person name="Robb F.T."/>
            <person name="Eisen J.A."/>
        </authorList>
    </citation>
    <scope>NUCLEOTIDE SEQUENCE [LARGE SCALE GENOMIC DNA]</scope>
    <source>
        <strain>ATCC BAA-161 / DSM 6008 / Z-2901</strain>
    </source>
</reference>
<organism>
    <name type="scientific">Carboxydothermus hydrogenoformans (strain ATCC BAA-161 / DSM 6008 / Z-2901)</name>
    <dbReference type="NCBI Taxonomy" id="246194"/>
    <lineage>
        <taxon>Bacteria</taxon>
        <taxon>Bacillati</taxon>
        <taxon>Bacillota</taxon>
        <taxon>Clostridia</taxon>
        <taxon>Thermoanaerobacterales</taxon>
        <taxon>Thermoanaerobacteraceae</taxon>
        <taxon>Carboxydothermus</taxon>
    </lineage>
</organism>
<proteinExistence type="inferred from homology"/>
<gene>
    <name evidence="1" type="primary">argG</name>
    <name type="ordered locus">CHY_2260</name>
</gene>
<name>ASSY_CARHZ</name>